<evidence type="ECO:0000255" key="1">
    <source>
        <dbReference type="HAMAP-Rule" id="MF_01176"/>
    </source>
</evidence>
<keyword id="KW-0001">2Fe-2S</keyword>
<keyword id="KW-0010">Activator</keyword>
<keyword id="KW-0238">DNA-binding</keyword>
<keyword id="KW-0408">Iron</keyword>
<keyword id="KW-0411">Iron-sulfur</keyword>
<keyword id="KW-0479">Metal-binding</keyword>
<keyword id="KW-0678">Repressor</keyword>
<keyword id="KW-0804">Transcription</keyword>
<keyword id="KW-0805">Transcription regulation</keyword>
<name>ISCR_ECOSE</name>
<protein>
    <recommendedName>
        <fullName evidence="1">HTH-type transcriptional regulator IscR</fullName>
    </recommendedName>
</protein>
<reference key="1">
    <citation type="journal article" date="2008" name="DNA Res.">
        <title>Complete genome sequence and comparative analysis of the wild-type commensal Escherichia coli strain SE11 isolated from a healthy adult.</title>
        <authorList>
            <person name="Oshima K."/>
            <person name="Toh H."/>
            <person name="Ogura Y."/>
            <person name="Sasamoto H."/>
            <person name="Morita H."/>
            <person name="Park S.-H."/>
            <person name="Ooka T."/>
            <person name="Iyoda S."/>
            <person name="Taylor T.D."/>
            <person name="Hayashi T."/>
            <person name="Itoh K."/>
            <person name="Hattori M."/>
        </authorList>
    </citation>
    <scope>NUCLEOTIDE SEQUENCE [LARGE SCALE GENOMIC DNA]</scope>
    <source>
        <strain>SE11</strain>
    </source>
</reference>
<accession>B6I5A3</accession>
<sequence>MRLTSKGRYAVTAMLDVALNSEAGPVPLADISERQGISLSYLEQLFSRLRKNGLVSSVRGPGGGYLLGKDASSIAVGEVISAVDESVDATRCQGKGGCQGGDKCLTHALWRDLSDRLTGFLNNITLGELVNNQEVLDVSGRQHTHDAPRTRIQDAIDVKLRA</sequence>
<comment type="function">
    <text evidence="1">Regulates the transcription of several operons and genes involved in the biogenesis of Fe-S clusters and Fe-S-containing proteins.</text>
</comment>
<comment type="cofactor">
    <cofactor evidence="1">
        <name>[2Fe-2S] cluster</name>
        <dbReference type="ChEBI" id="CHEBI:190135"/>
    </cofactor>
    <text evidence="1">Binds 1 [2Fe-2S] cluster.</text>
</comment>
<dbReference type="EMBL" id="AP009240">
    <property type="protein sequence ID" value="BAG78341.1"/>
    <property type="molecule type" value="Genomic_DNA"/>
</dbReference>
<dbReference type="RefSeq" id="WP_001241356.1">
    <property type="nucleotide sequence ID" value="NC_011415.1"/>
</dbReference>
<dbReference type="SMR" id="B6I5A3"/>
<dbReference type="GeneID" id="93774605"/>
<dbReference type="KEGG" id="ecy:ECSE_2817"/>
<dbReference type="HOGENOM" id="CLU_107144_0_0_6"/>
<dbReference type="Proteomes" id="UP000008199">
    <property type="component" value="Chromosome"/>
</dbReference>
<dbReference type="GO" id="GO:0005829">
    <property type="term" value="C:cytosol"/>
    <property type="evidence" value="ECO:0007669"/>
    <property type="project" value="TreeGrafter"/>
</dbReference>
<dbReference type="GO" id="GO:0051537">
    <property type="term" value="F:2 iron, 2 sulfur cluster binding"/>
    <property type="evidence" value="ECO:0007669"/>
    <property type="project" value="UniProtKB-KW"/>
</dbReference>
<dbReference type="GO" id="GO:0003700">
    <property type="term" value="F:DNA-binding transcription factor activity"/>
    <property type="evidence" value="ECO:0007669"/>
    <property type="project" value="UniProtKB-UniRule"/>
</dbReference>
<dbReference type="GO" id="GO:0003690">
    <property type="term" value="F:double-stranded DNA binding"/>
    <property type="evidence" value="ECO:0007669"/>
    <property type="project" value="UniProtKB-UniRule"/>
</dbReference>
<dbReference type="GO" id="GO:0005506">
    <property type="term" value="F:iron ion binding"/>
    <property type="evidence" value="ECO:0007669"/>
    <property type="project" value="UniProtKB-UniRule"/>
</dbReference>
<dbReference type="FunFam" id="1.10.10.10:FF:000026">
    <property type="entry name" value="HTH-type transcriptional regulator IscR"/>
    <property type="match status" value="1"/>
</dbReference>
<dbReference type="Gene3D" id="1.10.10.10">
    <property type="entry name" value="Winged helix-like DNA-binding domain superfamily/Winged helix DNA-binding domain"/>
    <property type="match status" value="1"/>
</dbReference>
<dbReference type="HAMAP" id="MF_01176">
    <property type="entry name" value="HTH_type_IscR"/>
    <property type="match status" value="1"/>
</dbReference>
<dbReference type="InterPro" id="IPR010242">
    <property type="entry name" value="TF_HTH_IscR"/>
</dbReference>
<dbReference type="InterPro" id="IPR030489">
    <property type="entry name" value="TR_Rrf2-type_CS"/>
</dbReference>
<dbReference type="InterPro" id="IPR000944">
    <property type="entry name" value="Tscrpt_reg_Rrf2"/>
</dbReference>
<dbReference type="InterPro" id="IPR036388">
    <property type="entry name" value="WH-like_DNA-bd_sf"/>
</dbReference>
<dbReference type="InterPro" id="IPR036390">
    <property type="entry name" value="WH_DNA-bd_sf"/>
</dbReference>
<dbReference type="NCBIfam" id="TIGR02010">
    <property type="entry name" value="IscR"/>
    <property type="match status" value="1"/>
</dbReference>
<dbReference type="NCBIfam" id="NF008110">
    <property type="entry name" value="PRK10857.1"/>
    <property type="match status" value="1"/>
</dbReference>
<dbReference type="NCBIfam" id="TIGR00738">
    <property type="entry name" value="rrf2_super"/>
    <property type="match status" value="1"/>
</dbReference>
<dbReference type="PANTHER" id="PTHR33221:SF5">
    <property type="entry name" value="HTH-TYPE TRANSCRIPTIONAL REGULATOR ISCR"/>
    <property type="match status" value="1"/>
</dbReference>
<dbReference type="PANTHER" id="PTHR33221">
    <property type="entry name" value="WINGED HELIX-TURN-HELIX TRANSCRIPTIONAL REGULATOR, RRF2 FAMILY"/>
    <property type="match status" value="1"/>
</dbReference>
<dbReference type="Pfam" id="PF02082">
    <property type="entry name" value="Rrf2"/>
    <property type="match status" value="1"/>
</dbReference>
<dbReference type="SUPFAM" id="SSF46785">
    <property type="entry name" value="Winged helix' DNA-binding domain"/>
    <property type="match status" value="1"/>
</dbReference>
<dbReference type="PROSITE" id="PS01332">
    <property type="entry name" value="HTH_RRF2_1"/>
    <property type="match status" value="1"/>
</dbReference>
<dbReference type="PROSITE" id="PS51197">
    <property type="entry name" value="HTH_RRF2_2"/>
    <property type="match status" value="1"/>
</dbReference>
<gene>
    <name evidence="1" type="primary">iscR</name>
    <name type="ordered locus">ECSE_2817</name>
</gene>
<proteinExistence type="inferred from homology"/>
<feature type="chain" id="PRO_1000138099" description="HTH-type transcriptional regulator IscR">
    <location>
        <begin position="1"/>
        <end position="162"/>
    </location>
</feature>
<feature type="domain" description="HTH rrf2-type" evidence="1">
    <location>
        <begin position="2"/>
        <end position="131"/>
    </location>
</feature>
<feature type="DNA-binding region" description="H-T-H motif" evidence="1">
    <location>
        <begin position="28"/>
        <end position="51"/>
    </location>
</feature>
<feature type="binding site" evidence="1">
    <location>
        <position position="92"/>
    </location>
    <ligand>
        <name>[2Fe-2S] cluster</name>
        <dbReference type="ChEBI" id="CHEBI:190135"/>
    </ligand>
</feature>
<feature type="binding site" evidence="1">
    <location>
        <position position="98"/>
    </location>
    <ligand>
        <name>[2Fe-2S] cluster</name>
        <dbReference type="ChEBI" id="CHEBI:190135"/>
    </ligand>
</feature>
<feature type="binding site" evidence="1">
    <location>
        <position position="104"/>
    </location>
    <ligand>
        <name>[2Fe-2S] cluster</name>
        <dbReference type="ChEBI" id="CHEBI:190135"/>
    </ligand>
</feature>
<organism>
    <name type="scientific">Escherichia coli (strain SE11)</name>
    <dbReference type="NCBI Taxonomy" id="409438"/>
    <lineage>
        <taxon>Bacteria</taxon>
        <taxon>Pseudomonadati</taxon>
        <taxon>Pseudomonadota</taxon>
        <taxon>Gammaproteobacteria</taxon>
        <taxon>Enterobacterales</taxon>
        <taxon>Enterobacteriaceae</taxon>
        <taxon>Escherichia</taxon>
    </lineage>
</organism>